<comment type="function">
    <text evidence="1">Catalyzes the cyclization of GTP to (8S)-3',8-cyclo-7,8-dihydroguanosine 5'-triphosphate.</text>
</comment>
<comment type="catalytic activity">
    <reaction evidence="1">
        <text>GTP + AH2 + S-adenosyl-L-methionine = (8S)-3',8-cyclo-7,8-dihydroguanosine 5'-triphosphate + 5'-deoxyadenosine + L-methionine + A + H(+)</text>
        <dbReference type="Rhea" id="RHEA:49576"/>
        <dbReference type="ChEBI" id="CHEBI:13193"/>
        <dbReference type="ChEBI" id="CHEBI:15378"/>
        <dbReference type="ChEBI" id="CHEBI:17319"/>
        <dbReference type="ChEBI" id="CHEBI:17499"/>
        <dbReference type="ChEBI" id="CHEBI:37565"/>
        <dbReference type="ChEBI" id="CHEBI:57844"/>
        <dbReference type="ChEBI" id="CHEBI:59789"/>
        <dbReference type="ChEBI" id="CHEBI:131766"/>
        <dbReference type="EC" id="4.1.99.22"/>
    </reaction>
</comment>
<comment type="cofactor">
    <cofactor evidence="1">
        <name>[4Fe-4S] cluster</name>
        <dbReference type="ChEBI" id="CHEBI:49883"/>
    </cofactor>
    <text evidence="1">Binds 2 [4Fe-4S] clusters. Binds 1 [4Fe-4S] cluster coordinated with 3 cysteines and an exchangeable S-adenosyl-L-methionine and 1 [4Fe-4S] cluster coordinated with 3 cysteines and the GTP-derived substrate.</text>
</comment>
<comment type="pathway">
    <text evidence="1">Cofactor biosynthesis; molybdopterin biosynthesis.</text>
</comment>
<comment type="subunit">
    <text evidence="1">Monomer and homodimer.</text>
</comment>
<comment type="similarity">
    <text evidence="1">Belongs to the radical SAM superfamily. MoaA family.</text>
</comment>
<feature type="chain" id="PRO_1000139346" description="GTP 3',8-cyclase">
    <location>
        <begin position="1"/>
        <end position="329"/>
    </location>
</feature>
<feature type="domain" description="Radical SAM core" evidence="2">
    <location>
        <begin position="8"/>
        <end position="234"/>
    </location>
</feature>
<feature type="binding site" evidence="1">
    <location>
        <position position="17"/>
    </location>
    <ligand>
        <name>GTP</name>
        <dbReference type="ChEBI" id="CHEBI:37565"/>
    </ligand>
</feature>
<feature type="binding site" evidence="1">
    <location>
        <position position="24"/>
    </location>
    <ligand>
        <name>[4Fe-4S] cluster</name>
        <dbReference type="ChEBI" id="CHEBI:49883"/>
        <label>1</label>
        <note>4Fe-4S-S-AdoMet</note>
    </ligand>
</feature>
<feature type="binding site" evidence="1">
    <location>
        <position position="28"/>
    </location>
    <ligand>
        <name>[4Fe-4S] cluster</name>
        <dbReference type="ChEBI" id="CHEBI:49883"/>
        <label>1</label>
        <note>4Fe-4S-S-AdoMet</note>
    </ligand>
</feature>
<feature type="binding site" evidence="1">
    <location>
        <position position="30"/>
    </location>
    <ligand>
        <name>S-adenosyl-L-methionine</name>
        <dbReference type="ChEBI" id="CHEBI:59789"/>
    </ligand>
</feature>
<feature type="binding site" evidence="1">
    <location>
        <position position="31"/>
    </location>
    <ligand>
        <name>[4Fe-4S] cluster</name>
        <dbReference type="ChEBI" id="CHEBI:49883"/>
        <label>1</label>
        <note>4Fe-4S-S-AdoMet</note>
    </ligand>
</feature>
<feature type="binding site" evidence="1">
    <location>
        <position position="68"/>
    </location>
    <ligand>
        <name>GTP</name>
        <dbReference type="ChEBI" id="CHEBI:37565"/>
    </ligand>
</feature>
<feature type="binding site" evidence="1">
    <location>
        <position position="72"/>
    </location>
    <ligand>
        <name>S-adenosyl-L-methionine</name>
        <dbReference type="ChEBI" id="CHEBI:59789"/>
    </ligand>
</feature>
<feature type="binding site" evidence="1">
    <location>
        <position position="99"/>
    </location>
    <ligand>
        <name>GTP</name>
        <dbReference type="ChEBI" id="CHEBI:37565"/>
    </ligand>
</feature>
<feature type="binding site" evidence="1">
    <location>
        <position position="123"/>
    </location>
    <ligand>
        <name>S-adenosyl-L-methionine</name>
        <dbReference type="ChEBI" id="CHEBI:59789"/>
    </ligand>
</feature>
<feature type="binding site" evidence="1">
    <location>
        <position position="160"/>
    </location>
    <ligand>
        <name>GTP</name>
        <dbReference type="ChEBI" id="CHEBI:37565"/>
    </ligand>
</feature>
<feature type="binding site" evidence="1">
    <location>
        <position position="194"/>
    </location>
    <ligand>
        <name>S-adenosyl-L-methionine</name>
        <dbReference type="ChEBI" id="CHEBI:59789"/>
    </ligand>
</feature>
<feature type="binding site" evidence="1">
    <location>
        <position position="257"/>
    </location>
    <ligand>
        <name>[4Fe-4S] cluster</name>
        <dbReference type="ChEBI" id="CHEBI:49883"/>
        <label>2</label>
        <note>4Fe-4S-substrate</note>
    </ligand>
</feature>
<feature type="binding site" evidence="1">
    <location>
        <position position="260"/>
    </location>
    <ligand>
        <name>[4Fe-4S] cluster</name>
        <dbReference type="ChEBI" id="CHEBI:49883"/>
        <label>2</label>
        <note>4Fe-4S-substrate</note>
    </ligand>
</feature>
<feature type="binding site" evidence="1">
    <location>
        <begin position="262"/>
        <end position="264"/>
    </location>
    <ligand>
        <name>GTP</name>
        <dbReference type="ChEBI" id="CHEBI:37565"/>
    </ligand>
</feature>
<feature type="binding site" evidence="1">
    <location>
        <position position="274"/>
    </location>
    <ligand>
        <name>[4Fe-4S] cluster</name>
        <dbReference type="ChEBI" id="CHEBI:49883"/>
        <label>2</label>
        <note>4Fe-4S-substrate</note>
    </ligand>
</feature>
<sequence>MASQLTDAFARKFYYLRLSITDVCNFRCTYCLPDGYKPGGVTNNGFLTVDEIRRVTRAFASLGTEKVRLTGGEPSLRRDFTDIIAAVGENDAIRQIAVTTNGYRLARDAANWREAGLTGVNVSVDSLDARQFHAITGQDKFRQVMAGIDAAFDAGFEKVKVNTVLMRDVNHHQLDTFLAWIQPRPIQLRFIELMETGEGSDLFRKHHISGQVLRDELIKRGWIHQLRQRSDGPAQVFCHPDYAGEIGLIMPYEKDFCATCNRLRVSSVGKLHLCLFGDGGVSLRDLLQDDAQQYALEERISDALREKKQTHFLHQSNTGITQNLSYIGG</sequence>
<name>MOAA_SALSV</name>
<accession>B4TQU6</accession>
<gene>
    <name evidence="1" type="primary">moaA</name>
    <name type="ordered locus">SeSA_A0951</name>
</gene>
<organism>
    <name type="scientific">Salmonella schwarzengrund (strain CVM19633)</name>
    <dbReference type="NCBI Taxonomy" id="439843"/>
    <lineage>
        <taxon>Bacteria</taxon>
        <taxon>Pseudomonadati</taxon>
        <taxon>Pseudomonadota</taxon>
        <taxon>Gammaproteobacteria</taxon>
        <taxon>Enterobacterales</taxon>
        <taxon>Enterobacteriaceae</taxon>
        <taxon>Salmonella</taxon>
    </lineage>
</organism>
<evidence type="ECO:0000255" key="1">
    <source>
        <dbReference type="HAMAP-Rule" id="MF_01225"/>
    </source>
</evidence>
<evidence type="ECO:0000255" key="2">
    <source>
        <dbReference type="PROSITE-ProRule" id="PRU01266"/>
    </source>
</evidence>
<reference key="1">
    <citation type="journal article" date="2011" name="J. Bacteriol.">
        <title>Comparative genomics of 28 Salmonella enterica isolates: evidence for CRISPR-mediated adaptive sublineage evolution.</title>
        <authorList>
            <person name="Fricke W.F."/>
            <person name="Mammel M.K."/>
            <person name="McDermott P.F."/>
            <person name="Tartera C."/>
            <person name="White D.G."/>
            <person name="Leclerc J.E."/>
            <person name="Ravel J."/>
            <person name="Cebula T.A."/>
        </authorList>
    </citation>
    <scope>NUCLEOTIDE SEQUENCE [LARGE SCALE GENOMIC DNA]</scope>
    <source>
        <strain>CVM19633</strain>
    </source>
</reference>
<dbReference type="EC" id="4.1.99.22" evidence="1"/>
<dbReference type="EMBL" id="CP001127">
    <property type="protein sequence ID" value="ACF89456.1"/>
    <property type="molecule type" value="Genomic_DNA"/>
</dbReference>
<dbReference type="RefSeq" id="WP_000168180.1">
    <property type="nucleotide sequence ID" value="NC_011094.1"/>
</dbReference>
<dbReference type="SMR" id="B4TQU6"/>
<dbReference type="KEGG" id="sew:SeSA_A0951"/>
<dbReference type="HOGENOM" id="CLU_009273_0_1_6"/>
<dbReference type="UniPathway" id="UPA00344"/>
<dbReference type="Proteomes" id="UP000001865">
    <property type="component" value="Chromosome"/>
</dbReference>
<dbReference type="GO" id="GO:0051539">
    <property type="term" value="F:4 iron, 4 sulfur cluster binding"/>
    <property type="evidence" value="ECO:0007669"/>
    <property type="project" value="UniProtKB-UniRule"/>
</dbReference>
<dbReference type="GO" id="GO:0061799">
    <property type="term" value="F:cyclic pyranopterin monophosphate synthase activity"/>
    <property type="evidence" value="ECO:0007669"/>
    <property type="project" value="TreeGrafter"/>
</dbReference>
<dbReference type="GO" id="GO:0061798">
    <property type="term" value="F:GTP 3',8'-cyclase activity"/>
    <property type="evidence" value="ECO:0007669"/>
    <property type="project" value="UniProtKB-UniRule"/>
</dbReference>
<dbReference type="GO" id="GO:0005525">
    <property type="term" value="F:GTP binding"/>
    <property type="evidence" value="ECO:0007669"/>
    <property type="project" value="UniProtKB-UniRule"/>
</dbReference>
<dbReference type="GO" id="GO:0046872">
    <property type="term" value="F:metal ion binding"/>
    <property type="evidence" value="ECO:0007669"/>
    <property type="project" value="UniProtKB-KW"/>
</dbReference>
<dbReference type="GO" id="GO:1904047">
    <property type="term" value="F:S-adenosyl-L-methionine binding"/>
    <property type="evidence" value="ECO:0007669"/>
    <property type="project" value="UniProtKB-UniRule"/>
</dbReference>
<dbReference type="GO" id="GO:0006777">
    <property type="term" value="P:Mo-molybdopterin cofactor biosynthetic process"/>
    <property type="evidence" value="ECO:0007669"/>
    <property type="project" value="UniProtKB-UniRule"/>
</dbReference>
<dbReference type="CDD" id="cd01335">
    <property type="entry name" value="Radical_SAM"/>
    <property type="match status" value="1"/>
</dbReference>
<dbReference type="CDD" id="cd21117">
    <property type="entry name" value="Twitch_MoaA"/>
    <property type="match status" value="1"/>
</dbReference>
<dbReference type="FunFam" id="3.20.20.70:FF:000057">
    <property type="entry name" value="GTP 3',8-cyclase"/>
    <property type="match status" value="1"/>
</dbReference>
<dbReference type="Gene3D" id="3.20.20.70">
    <property type="entry name" value="Aldolase class I"/>
    <property type="match status" value="1"/>
</dbReference>
<dbReference type="HAMAP" id="MF_01225_B">
    <property type="entry name" value="MoaA_B"/>
    <property type="match status" value="1"/>
</dbReference>
<dbReference type="InterPro" id="IPR013785">
    <property type="entry name" value="Aldolase_TIM"/>
</dbReference>
<dbReference type="InterPro" id="IPR006638">
    <property type="entry name" value="Elp3/MiaA/NifB-like_rSAM"/>
</dbReference>
<dbReference type="InterPro" id="IPR013483">
    <property type="entry name" value="MoaA"/>
</dbReference>
<dbReference type="InterPro" id="IPR000385">
    <property type="entry name" value="MoaA_NifB_PqqE_Fe-S-bd_CS"/>
</dbReference>
<dbReference type="InterPro" id="IPR010505">
    <property type="entry name" value="MoaA_twitch"/>
</dbReference>
<dbReference type="InterPro" id="IPR050105">
    <property type="entry name" value="MoCo_biosynth_MoaA/MoaC"/>
</dbReference>
<dbReference type="InterPro" id="IPR007197">
    <property type="entry name" value="rSAM"/>
</dbReference>
<dbReference type="NCBIfam" id="TIGR02666">
    <property type="entry name" value="moaA"/>
    <property type="match status" value="1"/>
</dbReference>
<dbReference type="PANTHER" id="PTHR22960:SF28">
    <property type="entry name" value="GTP 3',8-CYCLASE"/>
    <property type="match status" value="1"/>
</dbReference>
<dbReference type="PANTHER" id="PTHR22960">
    <property type="entry name" value="MOLYBDOPTERIN COFACTOR SYNTHESIS PROTEIN A"/>
    <property type="match status" value="1"/>
</dbReference>
<dbReference type="Pfam" id="PF06463">
    <property type="entry name" value="Mob_synth_C"/>
    <property type="match status" value="1"/>
</dbReference>
<dbReference type="Pfam" id="PF04055">
    <property type="entry name" value="Radical_SAM"/>
    <property type="match status" value="1"/>
</dbReference>
<dbReference type="SFLD" id="SFLDG01383">
    <property type="entry name" value="cyclic_pyranopterin_phosphate"/>
    <property type="match status" value="1"/>
</dbReference>
<dbReference type="SFLD" id="SFLDS00029">
    <property type="entry name" value="Radical_SAM"/>
    <property type="match status" value="1"/>
</dbReference>
<dbReference type="SMART" id="SM00729">
    <property type="entry name" value="Elp3"/>
    <property type="match status" value="1"/>
</dbReference>
<dbReference type="SUPFAM" id="SSF102114">
    <property type="entry name" value="Radical SAM enzymes"/>
    <property type="match status" value="1"/>
</dbReference>
<dbReference type="PROSITE" id="PS01305">
    <property type="entry name" value="MOAA_NIFB_PQQE"/>
    <property type="match status" value="1"/>
</dbReference>
<dbReference type="PROSITE" id="PS51918">
    <property type="entry name" value="RADICAL_SAM"/>
    <property type="match status" value="1"/>
</dbReference>
<protein>
    <recommendedName>
        <fullName evidence="1">GTP 3',8-cyclase</fullName>
        <ecNumber evidence="1">4.1.99.22</ecNumber>
    </recommendedName>
    <alternativeName>
        <fullName evidence="1">Molybdenum cofactor biosynthesis protein A</fullName>
    </alternativeName>
</protein>
<keyword id="KW-0004">4Fe-4S</keyword>
<keyword id="KW-0342">GTP-binding</keyword>
<keyword id="KW-0408">Iron</keyword>
<keyword id="KW-0411">Iron-sulfur</keyword>
<keyword id="KW-0456">Lyase</keyword>
<keyword id="KW-0479">Metal-binding</keyword>
<keyword id="KW-0501">Molybdenum cofactor biosynthesis</keyword>
<keyword id="KW-0547">Nucleotide-binding</keyword>
<keyword id="KW-0949">S-adenosyl-L-methionine</keyword>
<proteinExistence type="inferred from homology"/>